<gene>
    <name evidence="1" type="primary">rplA</name>
    <name type="ordered locus">BCB4264_A0118</name>
</gene>
<reference key="1">
    <citation type="submission" date="2008-10" db="EMBL/GenBank/DDBJ databases">
        <title>Genome sequence of Bacillus cereus B4264.</title>
        <authorList>
            <person name="Dodson R.J."/>
            <person name="Durkin A.S."/>
            <person name="Rosovitz M.J."/>
            <person name="Rasko D.A."/>
            <person name="Hoffmaster A."/>
            <person name="Ravel J."/>
            <person name="Sutton G."/>
        </authorList>
    </citation>
    <scope>NUCLEOTIDE SEQUENCE [LARGE SCALE GENOMIC DNA]</scope>
    <source>
        <strain>B4264</strain>
    </source>
</reference>
<proteinExistence type="inferred from homology"/>
<keyword id="KW-0678">Repressor</keyword>
<keyword id="KW-0687">Ribonucleoprotein</keyword>
<keyword id="KW-0689">Ribosomal protein</keyword>
<keyword id="KW-0694">RNA-binding</keyword>
<keyword id="KW-0699">rRNA-binding</keyword>
<keyword id="KW-0810">Translation regulation</keyword>
<keyword id="KW-0820">tRNA-binding</keyword>
<comment type="function">
    <text evidence="1">Binds directly to 23S rRNA. The L1 stalk is quite mobile in the ribosome, and is involved in E site tRNA release.</text>
</comment>
<comment type="function">
    <text evidence="1">Protein L1 is also a translational repressor protein, it controls the translation of the L11 operon by binding to its mRNA.</text>
</comment>
<comment type="subunit">
    <text evidence="1">Part of the 50S ribosomal subunit.</text>
</comment>
<comment type="similarity">
    <text evidence="1">Belongs to the universal ribosomal protein uL1 family.</text>
</comment>
<feature type="chain" id="PRO_1000141359" description="Large ribosomal subunit protein uL1">
    <location>
        <begin position="1"/>
        <end position="230"/>
    </location>
</feature>
<organism>
    <name type="scientific">Bacillus cereus (strain B4264)</name>
    <dbReference type="NCBI Taxonomy" id="405532"/>
    <lineage>
        <taxon>Bacteria</taxon>
        <taxon>Bacillati</taxon>
        <taxon>Bacillota</taxon>
        <taxon>Bacilli</taxon>
        <taxon>Bacillales</taxon>
        <taxon>Bacillaceae</taxon>
        <taxon>Bacillus</taxon>
        <taxon>Bacillus cereus group</taxon>
    </lineage>
</organism>
<protein>
    <recommendedName>
        <fullName evidence="1">Large ribosomal subunit protein uL1</fullName>
    </recommendedName>
    <alternativeName>
        <fullName evidence="2">50S ribosomal protein L1</fullName>
    </alternativeName>
</protein>
<name>RL1_BACC4</name>
<dbReference type="EMBL" id="CP001176">
    <property type="protein sequence ID" value="ACK62020.1"/>
    <property type="molecule type" value="Genomic_DNA"/>
</dbReference>
<dbReference type="RefSeq" id="WP_001987630.1">
    <property type="nucleotide sequence ID" value="NZ_VEHB01000017.1"/>
</dbReference>
<dbReference type="SMR" id="B7HJ36"/>
<dbReference type="KEGG" id="bcb:BCB4264_A0118"/>
<dbReference type="HOGENOM" id="CLU_062853_0_0_9"/>
<dbReference type="Proteomes" id="UP000007096">
    <property type="component" value="Chromosome"/>
</dbReference>
<dbReference type="GO" id="GO:0015934">
    <property type="term" value="C:large ribosomal subunit"/>
    <property type="evidence" value="ECO:0007669"/>
    <property type="project" value="InterPro"/>
</dbReference>
<dbReference type="GO" id="GO:0019843">
    <property type="term" value="F:rRNA binding"/>
    <property type="evidence" value="ECO:0007669"/>
    <property type="project" value="UniProtKB-UniRule"/>
</dbReference>
<dbReference type="GO" id="GO:0003735">
    <property type="term" value="F:structural constituent of ribosome"/>
    <property type="evidence" value="ECO:0007669"/>
    <property type="project" value="InterPro"/>
</dbReference>
<dbReference type="GO" id="GO:0000049">
    <property type="term" value="F:tRNA binding"/>
    <property type="evidence" value="ECO:0007669"/>
    <property type="project" value="UniProtKB-KW"/>
</dbReference>
<dbReference type="GO" id="GO:0006417">
    <property type="term" value="P:regulation of translation"/>
    <property type="evidence" value="ECO:0007669"/>
    <property type="project" value="UniProtKB-KW"/>
</dbReference>
<dbReference type="GO" id="GO:0006412">
    <property type="term" value="P:translation"/>
    <property type="evidence" value="ECO:0007669"/>
    <property type="project" value="UniProtKB-UniRule"/>
</dbReference>
<dbReference type="CDD" id="cd00403">
    <property type="entry name" value="Ribosomal_L1"/>
    <property type="match status" value="1"/>
</dbReference>
<dbReference type="FunFam" id="3.40.50.790:FF:000001">
    <property type="entry name" value="50S ribosomal protein L1"/>
    <property type="match status" value="1"/>
</dbReference>
<dbReference type="Gene3D" id="3.30.190.20">
    <property type="match status" value="1"/>
</dbReference>
<dbReference type="Gene3D" id="3.40.50.790">
    <property type="match status" value="1"/>
</dbReference>
<dbReference type="HAMAP" id="MF_01318_B">
    <property type="entry name" value="Ribosomal_uL1_B"/>
    <property type="match status" value="1"/>
</dbReference>
<dbReference type="InterPro" id="IPR005878">
    <property type="entry name" value="Ribosom_uL1_bac-type"/>
</dbReference>
<dbReference type="InterPro" id="IPR002143">
    <property type="entry name" value="Ribosomal_uL1"/>
</dbReference>
<dbReference type="InterPro" id="IPR023674">
    <property type="entry name" value="Ribosomal_uL1-like"/>
</dbReference>
<dbReference type="InterPro" id="IPR028364">
    <property type="entry name" value="Ribosomal_uL1/biogenesis"/>
</dbReference>
<dbReference type="InterPro" id="IPR016095">
    <property type="entry name" value="Ribosomal_uL1_3-a/b-sand"/>
</dbReference>
<dbReference type="InterPro" id="IPR023673">
    <property type="entry name" value="Ribosomal_uL1_CS"/>
</dbReference>
<dbReference type="NCBIfam" id="TIGR01169">
    <property type="entry name" value="rplA_bact"/>
    <property type="match status" value="1"/>
</dbReference>
<dbReference type="PANTHER" id="PTHR36427">
    <property type="entry name" value="54S RIBOSOMAL PROTEIN L1, MITOCHONDRIAL"/>
    <property type="match status" value="1"/>
</dbReference>
<dbReference type="PANTHER" id="PTHR36427:SF3">
    <property type="entry name" value="LARGE RIBOSOMAL SUBUNIT PROTEIN UL1M"/>
    <property type="match status" value="1"/>
</dbReference>
<dbReference type="Pfam" id="PF00687">
    <property type="entry name" value="Ribosomal_L1"/>
    <property type="match status" value="1"/>
</dbReference>
<dbReference type="PIRSF" id="PIRSF002155">
    <property type="entry name" value="Ribosomal_L1"/>
    <property type="match status" value="1"/>
</dbReference>
<dbReference type="SUPFAM" id="SSF56808">
    <property type="entry name" value="Ribosomal protein L1"/>
    <property type="match status" value="1"/>
</dbReference>
<dbReference type="PROSITE" id="PS01199">
    <property type="entry name" value="RIBOSOMAL_L1"/>
    <property type="match status" value="1"/>
</dbReference>
<accession>B7HJ36</accession>
<sequence>MAKRGKKYVEAAKLVDRAAAYSATEAVELVKKTNTAKFDATVEAAFRLGVDPKKADQQIRGAVVLPHGTGKVQRVLVFAKGEKAKEAEAAGADFVGDTDYIGKIQQGWFDFDVVVATPDMMGEVGKLGRVLGPKGLMPNPKTGTVTFDVTKAVNEIKAGKVEYRVDKAGNIHVPIGKVSFEDAKLVENFKTIADTLQKVKPAAAKGTYMKNVTVASTMGPGVRVDVSTLA</sequence>
<evidence type="ECO:0000255" key="1">
    <source>
        <dbReference type="HAMAP-Rule" id="MF_01318"/>
    </source>
</evidence>
<evidence type="ECO:0000305" key="2"/>